<comment type="function">
    <text evidence="1">Catalyzes the reversible epimerization of D-ribulose 5-phosphate to D-xylulose 5-phosphate.</text>
</comment>
<comment type="catalytic activity">
    <reaction evidence="1">
        <text>D-ribulose 5-phosphate = D-xylulose 5-phosphate</text>
        <dbReference type="Rhea" id="RHEA:13677"/>
        <dbReference type="ChEBI" id="CHEBI:57737"/>
        <dbReference type="ChEBI" id="CHEBI:58121"/>
        <dbReference type="EC" id="5.1.3.1"/>
    </reaction>
</comment>
<comment type="cofactor">
    <cofactor evidence="1">
        <name>a divalent metal cation</name>
        <dbReference type="ChEBI" id="CHEBI:60240"/>
    </cofactor>
    <text evidence="1">Binds 1 divalent metal cation per subunit.</text>
</comment>
<comment type="pathway">
    <text evidence="1">Carbohydrate degradation.</text>
</comment>
<comment type="similarity">
    <text evidence="1">Belongs to the ribulose-phosphate 3-epimerase family.</text>
</comment>
<organism>
    <name type="scientific">Mycoplasma genitalium (strain ATCC 33530 / DSM 19775 / NCTC 10195 / G37)</name>
    <name type="common">Mycoplasmoides genitalium</name>
    <dbReference type="NCBI Taxonomy" id="243273"/>
    <lineage>
        <taxon>Bacteria</taxon>
        <taxon>Bacillati</taxon>
        <taxon>Mycoplasmatota</taxon>
        <taxon>Mycoplasmoidales</taxon>
        <taxon>Mycoplasmoidaceae</taxon>
        <taxon>Mycoplasmoides</taxon>
    </lineage>
</organism>
<sequence>MATKVVFSLLPLLNRFDKSLLESYFQDGLRLIHYDVMDQFVHNTAFKGEYLDELKTIGFDVNVHLMVEQIIPQINFYLSQPNVKRISFHVEPFSFAKIKELIQLVKENGKEVGLAFKFTTNLQLYQPFFTTIDFITLMSVPPGKGGQAFNEAVFTNLKIANHYNLKIEIDGGIKVNNIDQIKAFVDFIVMGSGFIKLEQWQRQKLLQTI</sequence>
<dbReference type="EC" id="5.1.3.1" evidence="1"/>
<dbReference type="EMBL" id="L43967">
    <property type="protein sequence ID" value="AAC71330.1"/>
    <property type="molecule type" value="Genomic_DNA"/>
</dbReference>
<dbReference type="EMBL" id="U02181">
    <property type="protein sequence ID" value="AAD12467.1"/>
    <property type="molecule type" value="Genomic_DNA"/>
</dbReference>
<dbReference type="PIR" id="D64212">
    <property type="entry name" value="D64212"/>
</dbReference>
<dbReference type="RefSeq" id="WP_009885669.1">
    <property type="nucleotide sequence ID" value="NC_000908.2"/>
</dbReference>
<dbReference type="SMR" id="P47358"/>
<dbReference type="FunCoup" id="P47358">
    <property type="interactions" value="195"/>
</dbReference>
<dbReference type="STRING" id="243273.MG_112"/>
<dbReference type="GeneID" id="88282236"/>
<dbReference type="KEGG" id="mge:MG_112"/>
<dbReference type="eggNOG" id="COG0036">
    <property type="taxonomic scope" value="Bacteria"/>
</dbReference>
<dbReference type="HOGENOM" id="CLU_054856_2_2_14"/>
<dbReference type="InParanoid" id="P47358"/>
<dbReference type="OrthoDB" id="1645589at2"/>
<dbReference type="BioCyc" id="MGEN243273:G1GJ2-125-MONOMER"/>
<dbReference type="Proteomes" id="UP000000807">
    <property type="component" value="Chromosome"/>
</dbReference>
<dbReference type="GO" id="GO:0005829">
    <property type="term" value="C:cytosol"/>
    <property type="evidence" value="ECO:0000318"/>
    <property type="project" value="GO_Central"/>
</dbReference>
<dbReference type="GO" id="GO:0004750">
    <property type="term" value="F:D-ribulose-phosphate 3-epimerase activity"/>
    <property type="evidence" value="ECO:0000318"/>
    <property type="project" value="GO_Central"/>
</dbReference>
<dbReference type="GO" id="GO:0046872">
    <property type="term" value="F:metal ion binding"/>
    <property type="evidence" value="ECO:0000318"/>
    <property type="project" value="GO_Central"/>
</dbReference>
<dbReference type="GO" id="GO:0005975">
    <property type="term" value="P:carbohydrate metabolic process"/>
    <property type="evidence" value="ECO:0000318"/>
    <property type="project" value="GO_Central"/>
</dbReference>
<dbReference type="GO" id="GO:0019323">
    <property type="term" value="P:pentose catabolic process"/>
    <property type="evidence" value="ECO:0007669"/>
    <property type="project" value="UniProtKB-UniRule"/>
</dbReference>
<dbReference type="GO" id="GO:0009052">
    <property type="term" value="P:pentose-phosphate shunt, non-oxidative branch"/>
    <property type="evidence" value="ECO:0000318"/>
    <property type="project" value="GO_Central"/>
</dbReference>
<dbReference type="Gene3D" id="3.20.20.70">
    <property type="entry name" value="Aldolase class I"/>
    <property type="match status" value="1"/>
</dbReference>
<dbReference type="HAMAP" id="MF_02227">
    <property type="entry name" value="RPE"/>
    <property type="match status" value="1"/>
</dbReference>
<dbReference type="InterPro" id="IPR013785">
    <property type="entry name" value="Aldolase_TIM"/>
</dbReference>
<dbReference type="InterPro" id="IPR026019">
    <property type="entry name" value="Ribul_P_3_epim"/>
</dbReference>
<dbReference type="InterPro" id="IPR000056">
    <property type="entry name" value="Ribul_P_3_epim-like"/>
</dbReference>
<dbReference type="InterPro" id="IPR011060">
    <property type="entry name" value="RibuloseP-bd_barrel"/>
</dbReference>
<dbReference type="NCBIfam" id="NF004076">
    <property type="entry name" value="PRK05581.1-4"/>
    <property type="match status" value="1"/>
</dbReference>
<dbReference type="PANTHER" id="PTHR11749">
    <property type="entry name" value="RIBULOSE-5-PHOSPHATE-3-EPIMERASE"/>
    <property type="match status" value="1"/>
</dbReference>
<dbReference type="Pfam" id="PF00834">
    <property type="entry name" value="Ribul_P_3_epim"/>
    <property type="match status" value="1"/>
</dbReference>
<dbReference type="SUPFAM" id="SSF51366">
    <property type="entry name" value="Ribulose-phoshate binding barrel"/>
    <property type="match status" value="1"/>
</dbReference>
<dbReference type="PROSITE" id="PS01085">
    <property type="entry name" value="RIBUL_P_3_EPIMER_1"/>
    <property type="match status" value="1"/>
</dbReference>
<dbReference type="PROSITE" id="PS01086">
    <property type="entry name" value="RIBUL_P_3_EPIMER_2"/>
    <property type="match status" value="1"/>
</dbReference>
<accession>P47358</accession>
<accession>Q49304</accession>
<name>RPE_MYCGE</name>
<evidence type="ECO:0000255" key="1">
    <source>
        <dbReference type="HAMAP-Rule" id="MF_02227"/>
    </source>
</evidence>
<reference key="1">
    <citation type="journal article" date="1995" name="Science">
        <title>The minimal gene complement of Mycoplasma genitalium.</title>
        <authorList>
            <person name="Fraser C.M."/>
            <person name="Gocayne J.D."/>
            <person name="White O."/>
            <person name="Adams M.D."/>
            <person name="Clayton R.A."/>
            <person name="Fleischmann R.D."/>
            <person name="Bult C.J."/>
            <person name="Kerlavage A.R."/>
            <person name="Sutton G.G."/>
            <person name="Kelley J.M."/>
            <person name="Fritchman J.L."/>
            <person name="Weidman J.F."/>
            <person name="Small K.V."/>
            <person name="Sandusky M."/>
            <person name="Fuhrmann J.L."/>
            <person name="Nguyen D.T."/>
            <person name="Utterback T.R."/>
            <person name="Saudek D.M."/>
            <person name="Phillips C.A."/>
            <person name="Merrick J.M."/>
            <person name="Tomb J.-F."/>
            <person name="Dougherty B.A."/>
            <person name="Bott K.F."/>
            <person name="Hu P.-C."/>
            <person name="Lucier T.S."/>
            <person name="Peterson S.N."/>
            <person name="Smith H.O."/>
            <person name="Hutchison C.A. III"/>
            <person name="Venter J.C."/>
        </authorList>
    </citation>
    <scope>NUCLEOTIDE SEQUENCE [LARGE SCALE GENOMIC DNA]</scope>
    <source>
        <strain>ATCC 33530 / DSM 19775 / NCTC 10195 / G37</strain>
    </source>
</reference>
<reference key="2">
    <citation type="journal article" date="1993" name="J. Bacteriol.">
        <title>A survey of the Mycoplasma genitalium genome by using random sequencing.</title>
        <authorList>
            <person name="Peterson S.N."/>
            <person name="Hu P.-C."/>
            <person name="Bott K.F."/>
            <person name="Hutchison C.A. III"/>
        </authorList>
    </citation>
    <scope>NUCLEOTIDE SEQUENCE [GENOMIC DNA] OF 70-157</scope>
    <source>
        <strain>ATCC 33530 / DSM 19775 / NCTC 10195 / G37</strain>
    </source>
</reference>
<protein>
    <recommendedName>
        <fullName evidence="1">Ribulose-phosphate 3-epimerase</fullName>
        <ecNumber evidence="1">5.1.3.1</ecNumber>
    </recommendedName>
</protein>
<gene>
    <name evidence="1" type="primary">rpe</name>
    <name type="ordered locus">MG112</name>
</gene>
<feature type="chain" id="PRO_0000171575" description="Ribulose-phosphate 3-epimerase">
    <location>
        <begin position="1"/>
        <end position="209"/>
    </location>
</feature>
<feature type="active site" description="Proton acceptor" evidence="1">
    <location>
        <position position="35"/>
    </location>
</feature>
<feature type="active site" description="Proton donor" evidence="1">
    <location>
        <position position="170"/>
    </location>
</feature>
<feature type="binding site" evidence="1">
    <location>
        <position position="8"/>
    </location>
    <ligand>
        <name>substrate</name>
    </ligand>
</feature>
<feature type="binding site" evidence="1">
    <location>
        <position position="33"/>
    </location>
    <ligand>
        <name>a divalent metal cation</name>
        <dbReference type="ChEBI" id="CHEBI:60240"/>
    </ligand>
</feature>
<feature type="binding site" evidence="1">
    <location>
        <position position="35"/>
    </location>
    <ligand>
        <name>a divalent metal cation</name>
        <dbReference type="ChEBI" id="CHEBI:60240"/>
    </ligand>
</feature>
<feature type="binding site" evidence="1">
    <location>
        <position position="64"/>
    </location>
    <ligand>
        <name>a divalent metal cation</name>
        <dbReference type="ChEBI" id="CHEBI:60240"/>
    </ligand>
</feature>
<feature type="binding site" evidence="1">
    <location>
        <position position="64"/>
    </location>
    <ligand>
        <name>substrate</name>
    </ligand>
</feature>
<feature type="binding site" evidence="1">
    <location>
        <begin position="170"/>
        <end position="172"/>
    </location>
    <ligand>
        <name>substrate</name>
    </ligand>
</feature>
<feature type="binding site" evidence="1">
    <location>
        <position position="170"/>
    </location>
    <ligand>
        <name>a divalent metal cation</name>
        <dbReference type="ChEBI" id="CHEBI:60240"/>
    </ligand>
</feature>
<feature type="binding site" evidence="1">
    <location>
        <begin position="191"/>
        <end position="192"/>
    </location>
    <ligand>
        <name>substrate</name>
    </ligand>
</feature>
<proteinExistence type="inferred from homology"/>
<keyword id="KW-0119">Carbohydrate metabolism</keyword>
<keyword id="KW-0413">Isomerase</keyword>
<keyword id="KW-0479">Metal-binding</keyword>
<keyword id="KW-1185">Reference proteome</keyword>